<proteinExistence type="inferred from homology"/>
<protein>
    <recommendedName>
        <fullName evidence="2">Photosystem II CP47 reaction center protein</fullName>
    </recommendedName>
    <alternativeName>
        <fullName evidence="2">PSII 47 kDa protein</fullName>
    </alternativeName>
    <alternativeName>
        <fullName evidence="2">Protein CP-47</fullName>
    </alternativeName>
</protein>
<name>PSBB_CYAPA</name>
<evidence type="ECO:0000250" key="1"/>
<evidence type="ECO:0000255" key="2">
    <source>
        <dbReference type="HAMAP-Rule" id="MF_01495"/>
    </source>
</evidence>
<gene>
    <name evidence="2" type="primary">psbB</name>
</gene>
<feature type="chain" id="PRO_0000077480" description="Photosystem II CP47 reaction center protein">
    <location>
        <begin position="1"/>
        <end position="509"/>
    </location>
</feature>
<feature type="transmembrane region" description="Helical" evidence="2">
    <location>
        <begin position="21"/>
        <end position="36"/>
    </location>
</feature>
<feature type="transmembrane region" description="Helical" evidence="2">
    <location>
        <begin position="101"/>
        <end position="115"/>
    </location>
</feature>
<feature type="transmembrane region" description="Helical" evidence="2">
    <location>
        <begin position="140"/>
        <end position="156"/>
    </location>
</feature>
<feature type="transmembrane region" description="Helical" evidence="2">
    <location>
        <begin position="203"/>
        <end position="218"/>
    </location>
</feature>
<feature type="transmembrane region" description="Helical" evidence="2">
    <location>
        <begin position="237"/>
        <end position="252"/>
    </location>
</feature>
<feature type="transmembrane region" description="Helical" evidence="2">
    <location>
        <begin position="457"/>
        <end position="472"/>
    </location>
</feature>
<dbReference type="EMBL" id="U30821">
    <property type="protein sequence ID" value="AAA81198.1"/>
    <property type="molecule type" value="Genomic_DNA"/>
</dbReference>
<dbReference type="PIR" id="T06855">
    <property type="entry name" value="T06855"/>
</dbReference>
<dbReference type="RefSeq" id="NP_043167.1">
    <property type="nucleotide sequence ID" value="NC_001675.1"/>
</dbReference>
<dbReference type="SMR" id="P48103"/>
<dbReference type="GeneID" id="801566"/>
<dbReference type="GO" id="GO:0033115">
    <property type="term" value="C:cyanelle thylakoid membrane"/>
    <property type="evidence" value="ECO:0007669"/>
    <property type="project" value="UniProtKB-SubCell"/>
</dbReference>
<dbReference type="GO" id="GO:0009523">
    <property type="term" value="C:photosystem II"/>
    <property type="evidence" value="ECO:0007669"/>
    <property type="project" value="UniProtKB-KW"/>
</dbReference>
<dbReference type="GO" id="GO:0016168">
    <property type="term" value="F:chlorophyll binding"/>
    <property type="evidence" value="ECO:0007669"/>
    <property type="project" value="UniProtKB-UniRule"/>
</dbReference>
<dbReference type="GO" id="GO:0045156">
    <property type="term" value="F:electron transporter, transferring electrons within the cyclic electron transport pathway of photosynthesis activity"/>
    <property type="evidence" value="ECO:0007669"/>
    <property type="project" value="InterPro"/>
</dbReference>
<dbReference type="GO" id="GO:0009772">
    <property type="term" value="P:photosynthetic electron transport in photosystem II"/>
    <property type="evidence" value="ECO:0007669"/>
    <property type="project" value="InterPro"/>
</dbReference>
<dbReference type="Gene3D" id="3.10.680.10">
    <property type="entry name" value="Photosystem II CP47 reaction center protein"/>
    <property type="match status" value="1"/>
</dbReference>
<dbReference type="HAMAP" id="MF_01495">
    <property type="entry name" value="PSII_PsbB_CP47"/>
    <property type="match status" value="1"/>
</dbReference>
<dbReference type="InterPro" id="IPR000932">
    <property type="entry name" value="PS_antenna-like"/>
</dbReference>
<dbReference type="InterPro" id="IPR036001">
    <property type="entry name" value="PS_II_antenna-like_sf"/>
</dbReference>
<dbReference type="InterPro" id="IPR017486">
    <property type="entry name" value="PSII_PsbB"/>
</dbReference>
<dbReference type="NCBIfam" id="TIGR03039">
    <property type="entry name" value="PS_II_CP47"/>
    <property type="match status" value="1"/>
</dbReference>
<dbReference type="Pfam" id="PF00421">
    <property type="entry name" value="PSII"/>
    <property type="match status" value="1"/>
</dbReference>
<dbReference type="SUPFAM" id="SSF161077">
    <property type="entry name" value="Photosystem II antenna protein-like"/>
    <property type="match status" value="1"/>
</dbReference>
<sequence>MGLPWYRVHTVVLNDPGRLIAVHLMHTALVAGWAGSMALYEIAVFDPSDPVLNPMWRQGMFVLPFMVRLGITNSWGGWTINGENVTDPGFWSFEGVAAAHIGLSGLLFLAAIWHWVYWDLELFRDPRTGEPALDLPKMFGIHLFLSGLLCFGFGAFHLTGLFGPGMWVSDAYSITGRVQPVAPAWGPEGFNPFNPGGVVSHHIAAGIVGILAGLFHLSVRPPQRLYKALRMGNIETVLSSSISAVFFAAFIVAGTMWYGSAATPVELFGPTRYQWDQEYFHQEMERRVQKDVAAGASLSEAWNRIPAKLAFYDYIGNNPAKGGLFRAGPMNKGDGIAESWLGHATFKDKEGRELTVRRMPTFFETFPVVLIDKDGVLRADIPFRRAESKYSIEQMGVTVSFYGGKLDGQTFTDAPTVKKYARKAQLGEAFEFDRETLKSDGVFRSSARGWFTFGHASFALIFFFGHLWHGGRTLFRDVFAGIGEEVTEQVEFGAFQKVGDKTTRKQEAG</sequence>
<accession>P48103</accession>
<organism>
    <name type="scientific">Cyanophora paradoxa</name>
    <dbReference type="NCBI Taxonomy" id="2762"/>
    <lineage>
        <taxon>Eukaryota</taxon>
        <taxon>Glaucocystophyceae</taxon>
        <taxon>Cyanophoraceae</taxon>
        <taxon>Cyanophora</taxon>
    </lineage>
</organism>
<geneLocation type="cyanelle"/>
<comment type="function">
    <text evidence="2">One of the components of the core complex of photosystem II (PSII). It binds chlorophyll and helps catalyze the primary light-induced photochemical processes of PSII. PSII is a light-driven water:plastoquinone oxidoreductase, using light energy to abstract electrons from H(2)O, generating O(2) and a proton gradient subsequently used for ATP formation.</text>
</comment>
<comment type="cofactor">
    <text evidence="2">Binds multiple chlorophylls. PSII binds additional chlorophylls, carotenoids and specific lipids.</text>
</comment>
<comment type="subunit">
    <text evidence="2">PSII is composed of 1 copy each of membrane proteins PsbA, PsbB, PsbC, PsbD, PsbE, PsbF, PsbH, PsbI, PsbJ, PsbK, PsbL, PsbM, PsbT, PsbX, PsbY, PsbZ, Psb30/Ycf12, at least 3 peripheral proteins of the oxygen-evolving complex and a large number of cofactors. It forms dimeric complexes.</text>
</comment>
<comment type="subcellular location">
    <subcellularLocation>
        <location evidence="1">Plastid</location>
        <location evidence="1">Cyanelle thylakoid membrane</location>
        <topology evidence="1">Multi-pass membrane protein</topology>
    </subcellularLocation>
</comment>
<comment type="similarity">
    <text evidence="2">Belongs to the PsbB/PsbC family. PsbB subfamily.</text>
</comment>
<reference key="1">
    <citation type="journal article" date="1995" name="Plant Mol. Biol. Rep.">
        <title>Nucleotide sequence of the cyanelle DNA from Cyanophora paradoxa.</title>
        <authorList>
            <person name="Stirewalt V.L."/>
            <person name="Michalowski C.B."/>
            <person name="Loeffelhardt W."/>
            <person name="Bohnert H.J."/>
            <person name="Bryant D.A."/>
        </authorList>
    </citation>
    <scope>NUCLEOTIDE SEQUENCE [LARGE SCALE GENOMIC DNA]</scope>
    <source>
        <strain>UTEX LB 555 / Pringsheim</strain>
    </source>
</reference>
<reference key="2">
    <citation type="book" date="1997" name="Eukaryotism and symbiosis">
        <title>The complete sequence of the cyanelle genome of Cyanophora paradoxa: the genetic complexity of a primitive plastid.</title>
        <editorList>
            <person name="Schenk H.E.A."/>
            <person name="Herrmann R."/>
            <person name="Jeon K.W."/>
            <person name="Mueller N.E."/>
            <person name="Schwemmler W."/>
        </editorList>
        <authorList>
            <person name="Loeffelhardt W."/>
            <person name="Stirewalt V.L."/>
            <person name="Michalowski C.B."/>
            <person name="Annarella M."/>
            <person name="Farley J.Y."/>
            <person name="Schluchter W.M."/>
            <person name="Chung S."/>
            <person name="Newmann-Spallart C."/>
            <person name="Steiner J.M."/>
            <person name="Jakowitsch J."/>
            <person name="Bohnert H.J."/>
            <person name="Bryant D.A."/>
        </authorList>
    </citation>
    <scope>NUCLEOTIDE SEQUENCE [LARGE SCALE GENOMIC DNA]</scope>
    <source>
        <strain>UTEX LB 555 / Pringsheim</strain>
    </source>
</reference>
<keyword id="KW-0148">Chlorophyll</keyword>
<keyword id="KW-0157">Chromophore</keyword>
<keyword id="KW-0194">Cyanelle</keyword>
<keyword id="KW-0472">Membrane</keyword>
<keyword id="KW-0602">Photosynthesis</keyword>
<keyword id="KW-0604">Photosystem II</keyword>
<keyword id="KW-0934">Plastid</keyword>
<keyword id="KW-0793">Thylakoid</keyword>
<keyword id="KW-0812">Transmembrane</keyword>
<keyword id="KW-1133">Transmembrane helix</keyword>